<reference key="1">
    <citation type="journal article" date="1999" name="J. Biol. Chem.">
        <title>Characterization of a novel ADP-ribosylation factor-like protein (yARL3) in Saccharomyces cerevisiae.</title>
        <authorList>
            <person name="Huang C.F."/>
            <person name="Buu L.M."/>
            <person name="Yu W.L."/>
            <person name="Lee F.-J.S."/>
        </authorList>
    </citation>
    <scope>NUCLEOTIDE SEQUENCE [GENOMIC DNA]</scope>
    <scope>CHARACTERIZATION</scope>
</reference>
<reference key="2">
    <citation type="journal article" date="1997" name="Nature">
        <title>The nucleotide sequence of Saccharomyces cerevisiae chromosome XVI.</title>
        <authorList>
            <person name="Bussey H."/>
            <person name="Storms R.K."/>
            <person name="Ahmed A."/>
            <person name="Albermann K."/>
            <person name="Allen E."/>
            <person name="Ansorge W."/>
            <person name="Araujo R."/>
            <person name="Aparicio A."/>
            <person name="Barrell B.G."/>
            <person name="Badcock K."/>
            <person name="Benes V."/>
            <person name="Botstein D."/>
            <person name="Bowman S."/>
            <person name="Brueckner M."/>
            <person name="Carpenter J."/>
            <person name="Cherry J.M."/>
            <person name="Chung E."/>
            <person name="Churcher C.M."/>
            <person name="Coster F."/>
            <person name="Davis K."/>
            <person name="Davis R.W."/>
            <person name="Dietrich F.S."/>
            <person name="Delius H."/>
            <person name="DiPaolo T."/>
            <person name="Dubois E."/>
            <person name="Duesterhoeft A."/>
            <person name="Duncan M."/>
            <person name="Floeth M."/>
            <person name="Fortin N."/>
            <person name="Friesen J.D."/>
            <person name="Fritz C."/>
            <person name="Goffeau A."/>
            <person name="Hall J."/>
            <person name="Hebling U."/>
            <person name="Heumann K."/>
            <person name="Hilbert H."/>
            <person name="Hillier L.W."/>
            <person name="Hunicke-Smith S."/>
            <person name="Hyman R.W."/>
            <person name="Johnston M."/>
            <person name="Kalman S."/>
            <person name="Kleine K."/>
            <person name="Komp C."/>
            <person name="Kurdi O."/>
            <person name="Lashkari D."/>
            <person name="Lew H."/>
            <person name="Lin A."/>
            <person name="Lin D."/>
            <person name="Louis E.J."/>
            <person name="Marathe R."/>
            <person name="Messenguy F."/>
            <person name="Mewes H.-W."/>
            <person name="Mirtipati S."/>
            <person name="Moestl D."/>
            <person name="Mueller-Auer S."/>
            <person name="Namath A."/>
            <person name="Nentwich U."/>
            <person name="Oefner P."/>
            <person name="Pearson D."/>
            <person name="Petel F.X."/>
            <person name="Pohl T.M."/>
            <person name="Purnelle B."/>
            <person name="Rajandream M.A."/>
            <person name="Rechmann S."/>
            <person name="Rieger M."/>
            <person name="Riles L."/>
            <person name="Roberts D."/>
            <person name="Schaefer M."/>
            <person name="Scharfe M."/>
            <person name="Scherens B."/>
            <person name="Schramm S."/>
            <person name="Schroeder M."/>
            <person name="Sdicu A.-M."/>
            <person name="Tettelin H."/>
            <person name="Urrestarazu L.A."/>
            <person name="Ushinsky S."/>
            <person name="Vierendeels F."/>
            <person name="Vissers S."/>
            <person name="Voss H."/>
            <person name="Walsh S.V."/>
            <person name="Wambutt R."/>
            <person name="Wang Y."/>
            <person name="Wedler E."/>
            <person name="Wedler H."/>
            <person name="Winnett E."/>
            <person name="Zhong W.-W."/>
            <person name="Zollner A."/>
            <person name="Vo D.H."/>
            <person name="Hani J."/>
        </authorList>
    </citation>
    <scope>NUCLEOTIDE SEQUENCE [LARGE SCALE GENOMIC DNA]</scope>
    <source>
        <strain>ATCC 204508 / S288c</strain>
    </source>
</reference>
<reference key="3">
    <citation type="journal article" date="2014" name="G3 (Bethesda)">
        <title>The reference genome sequence of Saccharomyces cerevisiae: Then and now.</title>
        <authorList>
            <person name="Engel S.R."/>
            <person name="Dietrich F.S."/>
            <person name="Fisk D.G."/>
            <person name="Binkley G."/>
            <person name="Balakrishnan R."/>
            <person name="Costanzo M.C."/>
            <person name="Dwight S.S."/>
            <person name="Hitz B.C."/>
            <person name="Karra K."/>
            <person name="Nash R.S."/>
            <person name="Weng S."/>
            <person name="Wong E.D."/>
            <person name="Lloyd P."/>
            <person name="Skrzypek M.S."/>
            <person name="Miyasato S.R."/>
            <person name="Simison M."/>
            <person name="Cherry J.M."/>
        </authorList>
    </citation>
    <scope>GENOME REANNOTATION</scope>
    <source>
        <strain>ATCC 204508 / S288c</strain>
    </source>
</reference>
<reference key="4">
    <citation type="journal article" date="2007" name="Genome Res.">
        <title>Approaching a complete repository of sequence-verified protein-encoding clones for Saccharomyces cerevisiae.</title>
        <authorList>
            <person name="Hu Y."/>
            <person name="Rolfs A."/>
            <person name="Bhullar B."/>
            <person name="Murthy T.V.S."/>
            <person name="Zhu C."/>
            <person name="Berger M.F."/>
            <person name="Camargo A.A."/>
            <person name="Kelley F."/>
            <person name="McCarron S."/>
            <person name="Jepson D."/>
            <person name="Richardson A."/>
            <person name="Raphael J."/>
            <person name="Moreira D."/>
            <person name="Taycher E."/>
            <person name="Zuo D."/>
            <person name="Mohr S."/>
            <person name="Kane M.F."/>
            <person name="Williamson J."/>
            <person name="Simpson A.J.G."/>
            <person name="Bulyk M.L."/>
            <person name="Harlow E."/>
            <person name="Marsischky G."/>
            <person name="Kolodner R.D."/>
            <person name="LaBaer J."/>
        </authorList>
    </citation>
    <scope>NUCLEOTIDE SEQUENCE [GENOMIC DNA]</scope>
    <source>
        <strain>ATCC 204508 / S288c</strain>
    </source>
</reference>
<reference key="5">
    <citation type="journal article" date="2003" name="Curr. Biol.">
        <title>Golgi recruitment of GRIP domain proteins by Arf-like GTPase 1 is regulated by Arf-like GTPase 3.</title>
        <authorList>
            <person name="Setty S.R.G."/>
            <person name="Shin M.E."/>
            <person name="Yoshino A."/>
            <person name="Marks M.S."/>
            <person name="Burd C.G."/>
        </authorList>
    </citation>
    <scope>FUNCTION</scope>
</reference>
<reference key="6">
    <citation type="journal article" date="2003" name="Curr. Biol.">
        <title>The ARF-like GTPases Arl1p and Arl3p act in a pathway that interacts with vesicle-tethering factors at the Golgi apparatus.</title>
        <authorList>
            <person name="Panic B."/>
            <person name="Whyte J.R.C."/>
            <person name="Munro S."/>
        </authorList>
    </citation>
    <scope>FUNCTION</scope>
    <scope>INTERACTION WITH SLO1</scope>
</reference>
<reference key="7">
    <citation type="journal article" date="2003" name="Nature">
        <title>Global analysis of protein expression in yeast.</title>
        <authorList>
            <person name="Ghaemmaghami S."/>
            <person name="Huh W.-K."/>
            <person name="Bower K."/>
            <person name="Howson R.W."/>
            <person name="Belle A."/>
            <person name="Dephoure N."/>
            <person name="O'Shea E.K."/>
            <person name="Weissman J.S."/>
        </authorList>
    </citation>
    <scope>LEVEL OF PROTEIN EXPRESSION [LARGE SCALE ANALYSIS]</scope>
</reference>
<reference key="8">
    <citation type="journal article" date="2004" name="Nat. Cell Biol.">
        <title>Targeting of the Arf-like GTPase Arl3p to the Golgi requires N-terminal acetylation and the membrane protein Sys1p.</title>
        <authorList>
            <person name="Behnia R."/>
            <person name="Panic B."/>
            <person name="Whyte J.R.C."/>
            <person name="Munro S."/>
        </authorList>
    </citation>
    <scope>ACETYLATION AT MET-1</scope>
    <scope>INTERACTION WITH SYS1</scope>
</reference>
<reference key="9">
    <citation type="journal article" date="2004" name="Nat. Cell Biol.">
        <title>Golgi targeting of ARF-like GTPase Arl3p requires its Nalpha-acetylation and the integral membrane protein Sys1p.</title>
        <authorList>
            <person name="Setty S.R."/>
            <person name="Strochlic T.I."/>
            <person name="Tong A.H."/>
            <person name="Boone C."/>
            <person name="Burd C.G."/>
        </authorList>
    </citation>
    <scope>ACETYLATION AT MET-1</scope>
    <scope>INTERACTION WITH SYS1</scope>
</reference>
<reference key="10">
    <citation type="journal article" date="2012" name="Proteomics">
        <title>Sites of ubiquitin attachment in Saccharomyces cerevisiae.</title>
        <authorList>
            <person name="Starita L.M."/>
            <person name="Lo R.S."/>
            <person name="Eng J.K."/>
            <person name="von Haller P.D."/>
            <person name="Fields S."/>
        </authorList>
    </citation>
    <scope>UBIQUITINATION [LARGE SCALE ANALYSIS] AT LYS-50</scope>
    <scope>IDENTIFICATION BY MASS SPECTROMETRY [LARGE SCALE ANALYSIS]</scope>
</reference>
<sequence length="198" mass="22782">MFHLVKGLYNNWNKKEQYSILILGLDNAGKTTFLETLKKEYSLAFKALEKIQPTVGQNVATIPVDSKQILKFWDVGGQESLRSMWSEYYSLCHGIIFIVDSSDRERLDECSTTLQSVVMDEEIEGVPILMLANKQDRQDRMEVQDIKEVFNKIAEHISARDSRVLPISALTGEGVKDAIEWMIVRLERNKKSRPPIYK</sequence>
<accession>Q02804</accession>
<accession>D6W3W3</accession>
<keyword id="KW-0002">3D-structure</keyword>
<keyword id="KW-0007">Acetylation</keyword>
<keyword id="KW-0333">Golgi apparatus</keyword>
<keyword id="KW-0342">GTP-binding</keyword>
<keyword id="KW-1017">Isopeptide bond</keyword>
<keyword id="KW-0547">Nucleotide-binding</keyword>
<keyword id="KW-0653">Protein transport</keyword>
<keyword id="KW-1185">Reference proteome</keyword>
<keyword id="KW-0813">Transport</keyword>
<keyword id="KW-0832">Ubl conjugation</keyword>
<comment type="function">
    <text evidence="2 3">Involved in the targeting of ARL1 to the Golgi. Can bind and hydrolyze GTP.</text>
</comment>
<comment type="subunit">
    <text evidence="3 5 6">Interacts with SYS1 and SLO1.</text>
</comment>
<comment type="subcellular location">
    <subcellularLocation>
        <location>Golgi apparatus</location>
    </subcellularLocation>
</comment>
<comment type="miscellaneous">
    <text evidence="4">Present with 1920 molecules/cell in log phase SD medium.</text>
</comment>
<comment type="similarity">
    <text evidence="7">Belongs to the small GTPase superfamily. Arf family.</text>
</comment>
<feature type="chain" id="PRO_0000207422" description="ADP-ribosylation factor-like protein 3">
    <location>
        <begin position="1"/>
        <end position="198"/>
    </location>
</feature>
<feature type="binding site" evidence="1">
    <location>
        <begin position="24"/>
        <end position="31"/>
    </location>
    <ligand>
        <name>GTP</name>
        <dbReference type="ChEBI" id="CHEBI:37565"/>
    </ligand>
</feature>
<feature type="binding site" evidence="1">
    <location>
        <begin position="74"/>
        <end position="78"/>
    </location>
    <ligand>
        <name>GTP</name>
        <dbReference type="ChEBI" id="CHEBI:37565"/>
    </ligand>
</feature>
<feature type="binding site" evidence="1">
    <location>
        <begin position="133"/>
        <end position="136"/>
    </location>
    <ligand>
        <name>GTP</name>
        <dbReference type="ChEBI" id="CHEBI:37565"/>
    </ligand>
</feature>
<feature type="modified residue" description="N-acetylmethionine" evidence="5 6">
    <location>
        <position position="1"/>
    </location>
</feature>
<feature type="cross-link" description="Glycyl lysine isopeptide (Lys-Gly) (interchain with G-Cter in ubiquitin)" evidence="8">
    <location>
        <position position="50"/>
    </location>
</feature>
<proteinExistence type="evidence at protein level"/>
<protein>
    <recommendedName>
        <fullName>ADP-ribosylation factor-like protein 3</fullName>
    </recommendedName>
    <alternativeName>
        <fullName>Arf-like GTPase 3</fullName>
    </alternativeName>
</protein>
<gene>
    <name type="primary">ARL3</name>
    <name type="synonym">ARP1</name>
    <name type="ordered locus">YPL051W</name>
</gene>
<organism>
    <name type="scientific">Saccharomyces cerevisiae (strain ATCC 204508 / S288c)</name>
    <name type="common">Baker's yeast</name>
    <dbReference type="NCBI Taxonomy" id="559292"/>
    <lineage>
        <taxon>Eukaryota</taxon>
        <taxon>Fungi</taxon>
        <taxon>Dikarya</taxon>
        <taxon>Ascomycota</taxon>
        <taxon>Saccharomycotina</taxon>
        <taxon>Saccharomycetes</taxon>
        <taxon>Saccharomycetales</taxon>
        <taxon>Saccharomycetaceae</taxon>
        <taxon>Saccharomyces</taxon>
    </lineage>
</organism>
<evidence type="ECO:0000250" key="1"/>
<evidence type="ECO:0000269" key="2">
    <source>
    </source>
</evidence>
<evidence type="ECO:0000269" key="3">
    <source>
    </source>
</evidence>
<evidence type="ECO:0000269" key="4">
    <source>
    </source>
</evidence>
<evidence type="ECO:0000269" key="5">
    <source>
    </source>
</evidence>
<evidence type="ECO:0000269" key="6">
    <source>
    </source>
</evidence>
<evidence type="ECO:0000305" key="7"/>
<evidence type="ECO:0007744" key="8">
    <source>
    </source>
</evidence>
<dbReference type="EMBL" id="AF017142">
    <property type="protein sequence ID" value="AAD13357.1"/>
    <property type="molecule type" value="Genomic_DNA"/>
</dbReference>
<dbReference type="EMBL" id="U39205">
    <property type="protein sequence ID" value="AAB68314.1"/>
    <property type="molecule type" value="Genomic_DNA"/>
</dbReference>
<dbReference type="EMBL" id="AY558323">
    <property type="protein sequence ID" value="AAS56649.1"/>
    <property type="molecule type" value="Genomic_DNA"/>
</dbReference>
<dbReference type="EMBL" id="BK006949">
    <property type="protein sequence ID" value="DAA11379.1"/>
    <property type="molecule type" value="Genomic_DNA"/>
</dbReference>
<dbReference type="PIR" id="S61091">
    <property type="entry name" value="S61091"/>
</dbReference>
<dbReference type="RefSeq" id="NP_015274.1">
    <property type="nucleotide sequence ID" value="NM_001183865.1"/>
</dbReference>
<dbReference type="PDB" id="6YGC">
    <property type="method" value="X-ray"/>
    <property type="resolution" value="2.99 A"/>
    <property type="chains" value="D=1-5"/>
</dbReference>
<dbReference type="PDBsum" id="6YGC"/>
<dbReference type="SMR" id="Q02804"/>
<dbReference type="BioGRID" id="36129">
    <property type="interactions" value="436"/>
</dbReference>
<dbReference type="DIP" id="DIP-2122N"/>
<dbReference type="FunCoup" id="Q02804">
    <property type="interactions" value="850"/>
</dbReference>
<dbReference type="IntAct" id="Q02804">
    <property type="interactions" value="6"/>
</dbReference>
<dbReference type="MINT" id="Q02804"/>
<dbReference type="STRING" id="4932.YPL051W"/>
<dbReference type="GlyGen" id="Q02804">
    <property type="glycosylation" value="1 site"/>
</dbReference>
<dbReference type="iPTMnet" id="Q02804"/>
<dbReference type="PaxDb" id="4932-YPL051W"/>
<dbReference type="PeptideAtlas" id="Q02804"/>
<dbReference type="EnsemblFungi" id="YPL051W_mRNA">
    <property type="protein sequence ID" value="YPL051W"/>
    <property type="gene ID" value="YPL051W"/>
</dbReference>
<dbReference type="GeneID" id="856056"/>
<dbReference type="KEGG" id="sce:YPL051W"/>
<dbReference type="AGR" id="SGD:S000005972"/>
<dbReference type="SGD" id="S000005972">
    <property type="gene designation" value="ARL3"/>
</dbReference>
<dbReference type="VEuPathDB" id="FungiDB:YPL051W"/>
<dbReference type="eggNOG" id="KOG0076">
    <property type="taxonomic scope" value="Eukaryota"/>
</dbReference>
<dbReference type="GeneTree" id="ENSGT00940000156407"/>
<dbReference type="HOGENOM" id="CLU_040729_7_2_1"/>
<dbReference type="InParanoid" id="Q02804"/>
<dbReference type="OMA" id="HGFYKYM"/>
<dbReference type="OrthoDB" id="414781at2759"/>
<dbReference type="BioCyc" id="YEAST:G3O-33964-MONOMER"/>
<dbReference type="Reactome" id="R-SCE-6811440">
    <property type="pathway name" value="Retrograde transport at the Trans-Golgi-Network"/>
</dbReference>
<dbReference type="BioGRID-ORCS" id="856056">
    <property type="hits" value="0 hits in 10 CRISPR screens"/>
</dbReference>
<dbReference type="PRO" id="PR:Q02804"/>
<dbReference type="Proteomes" id="UP000002311">
    <property type="component" value="Chromosome XVI"/>
</dbReference>
<dbReference type="RNAct" id="Q02804">
    <property type="molecule type" value="protein"/>
</dbReference>
<dbReference type="GO" id="GO:0005829">
    <property type="term" value="C:cytosol"/>
    <property type="evidence" value="ECO:0007005"/>
    <property type="project" value="SGD"/>
</dbReference>
<dbReference type="GO" id="GO:0005794">
    <property type="term" value="C:Golgi apparatus"/>
    <property type="evidence" value="ECO:0000314"/>
    <property type="project" value="SGD"/>
</dbReference>
<dbReference type="GO" id="GO:0042175">
    <property type="term" value="C:nuclear outer membrane-endoplasmic reticulum membrane network"/>
    <property type="evidence" value="ECO:0000314"/>
    <property type="project" value="SGD"/>
</dbReference>
<dbReference type="GO" id="GO:0005525">
    <property type="term" value="F:GTP binding"/>
    <property type="evidence" value="ECO:0000318"/>
    <property type="project" value="GO_Central"/>
</dbReference>
<dbReference type="GO" id="GO:0003924">
    <property type="term" value="F:GTPase activity"/>
    <property type="evidence" value="ECO:0000314"/>
    <property type="project" value="SGD"/>
</dbReference>
<dbReference type="GO" id="GO:0043001">
    <property type="term" value="P:Golgi to plasma membrane protein transport"/>
    <property type="evidence" value="ECO:0000315"/>
    <property type="project" value="SGD"/>
</dbReference>
<dbReference type="GO" id="GO:0006886">
    <property type="term" value="P:intracellular protein transport"/>
    <property type="evidence" value="ECO:0000315"/>
    <property type="project" value="SGD"/>
</dbReference>
<dbReference type="GO" id="GO:0034067">
    <property type="term" value="P:protein localization to Golgi apparatus"/>
    <property type="evidence" value="ECO:0000315"/>
    <property type="project" value="SGD"/>
</dbReference>
<dbReference type="GO" id="GO:0034976">
    <property type="term" value="P:response to endoplasmic reticulum stress"/>
    <property type="evidence" value="ECO:0000315"/>
    <property type="project" value="SGD"/>
</dbReference>
<dbReference type="CDD" id="cd04160">
    <property type="entry name" value="Arfrp1"/>
    <property type="match status" value="1"/>
</dbReference>
<dbReference type="FunFam" id="3.40.50.300:FF:001317">
    <property type="entry name" value="Putative ADP-ribosylation factor"/>
    <property type="match status" value="1"/>
</dbReference>
<dbReference type="Gene3D" id="3.40.50.300">
    <property type="entry name" value="P-loop containing nucleotide triphosphate hydrolases"/>
    <property type="match status" value="1"/>
</dbReference>
<dbReference type="InterPro" id="IPR027417">
    <property type="entry name" value="P-loop_NTPase"/>
</dbReference>
<dbReference type="InterPro" id="IPR005225">
    <property type="entry name" value="Small_GTP-bd"/>
</dbReference>
<dbReference type="InterPro" id="IPR024156">
    <property type="entry name" value="Small_GTPase_ARF"/>
</dbReference>
<dbReference type="InterPro" id="IPR006689">
    <property type="entry name" value="Small_GTPase_ARF/SAR"/>
</dbReference>
<dbReference type="NCBIfam" id="TIGR00231">
    <property type="entry name" value="small_GTP"/>
    <property type="match status" value="1"/>
</dbReference>
<dbReference type="PANTHER" id="PTHR45909">
    <property type="entry name" value="ADP-RIBOSYLATION FACTOR-RELATED PROTEIN 1"/>
    <property type="match status" value="1"/>
</dbReference>
<dbReference type="PANTHER" id="PTHR45909:SF1">
    <property type="entry name" value="ADP-RIBOSYLATION FACTOR-RELATED PROTEIN 1"/>
    <property type="match status" value="1"/>
</dbReference>
<dbReference type="Pfam" id="PF00025">
    <property type="entry name" value="Arf"/>
    <property type="match status" value="1"/>
</dbReference>
<dbReference type="PRINTS" id="PR00328">
    <property type="entry name" value="SAR1GTPBP"/>
</dbReference>
<dbReference type="SMART" id="SM00177">
    <property type="entry name" value="ARF"/>
    <property type="match status" value="1"/>
</dbReference>
<dbReference type="SMART" id="SM00175">
    <property type="entry name" value="RAB"/>
    <property type="match status" value="1"/>
</dbReference>
<dbReference type="SMART" id="SM00178">
    <property type="entry name" value="SAR"/>
    <property type="match status" value="1"/>
</dbReference>
<dbReference type="SUPFAM" id="SSF52540">
    <property type="entry name" value="P-loop containing nucleoside triphosphate hydrolases"/>
    <property type="match status" value="1"/>
</dbReference>
<dbReference type="PROSITE" id="PS51417">
    <property type="entry name" value="ARF"/>
    <property type="match status" value="1"/>
</dbReference>
<name>ARL3_YEAST</name>